<accession>Q9DD78</accession>
<proteinExistence type="evidence at transcript level"/>
<protein>
    <recommendedName>
        <fullName>Toll-like receptor 2 type-1</fullName>
    </recommendedName>
</protein>
<reference key="1">
    <citation type="journal article" date="2001" name="J. Biol. Chem.">
        <title>Molecular cloning and functional characterization of chicken Toll-like receptors. A single chicken Toll covers multiple molecular patterns.</title>
        <authorList>
            <person name="Fukui A."/>
            <person name="Inoue N."/>
            <person name="Matsumoto M."/>
            <person name="Nomura M."/>
            <person name="Yamada K."/>
            <person name="Matsuda Y."/>
            <person name="Toyoshima K."/>
            <person name="Seya T."/>
        </authorList>
    </citation>
    <scope>NUCLEOTIDE SEQUENCE [MRNA]</scope>
    <source>
        <tissue>Liver</tissue>
    </source>
</reference>
<reference key="2">
    <citation type="submission" date="2000-07" db="EMBL/GenBank/DDBJ databases">
        <title>Molecular cloning and expression analysis of the chick Toll-like receptor 2 in embryonic ventricular myocytes.</title>
        <authorList>
            <person name="Takahashi T."/>
        </authorList>
    </citation>
    <scope>NUCLEOTIDE SEQUENCE [MRNA]</scope>
</reference>
<gene>
    <name type="primary">TLR2-1</name>
</gene>
<organism>
    <name type="scientific">Gallus gallus</name>
    <name type="common">Chicken</name>
    <dbReference type="NCBI Taxonomy" id="9031"/>
    <lineage>
        <taxon>Eukaryota</taxon>
        <taxon>Metazoa</taxon>
        <taxon>Chordata</taxon>
        <taxon>Craniata</taxon>
        <taxon>Vertebrata</taxon>
        <taxon>Euteleostomi</taxon>
        <taxon>Archelosauria</taxon>
        <taxon>Archosauria</taxon>
        <taxon>Dinosauria</taxon>
        <taxon>Saurischia</taxon>
        <taxon>Theropoda</taxon>
        <taxon>Coelurosauria</taxon>
        <taxon>Aves</taxon>
        <taxon>Neognathae</taxon>
        <taxon>Galloanserae</taxon>
        <taxon>Galliformes</taxon>
        <taxon>Phasianidae</taxon>
        <taxon>Phasianinae</taxon>
        <taxon>Gallus</taxon>
    </lineage>
</organism>
<dbReference type="EMBL" id="AB050005">
    <property type="protein sequence ID" value="BAB16843.1"/>
    <property type="molecule type" value="mRNA"/>
</dbReference>
<dbReference type="EMBL" id="AB046119">
    <property type="protein sequence ID" value="BAB16113.2"/>
    <property type="molecule type" value="mRNA"/>
</dbReference>
<dbReference type="RefSeq" id="NP_989609.1">
    <property type="nucleotide sequence ID" value="NM_204278.1"/>
</dbReference>
<dbReference type="SMR" id="Q9DD78"/>
<dbReference type="FunCoup" id="Q9DD78">
    <property type="interactions" value="117"/>
</dbReference>
<dbReference type="STRING" id="9031.ENSGALP00000050968"/>
<dbReference type="GlyCosmos" id="Q9DD78">
    <property type="glycosylation" value="8 sites, No reported glycans"/>
</dbReference>
<dbReference type="GlyGen" id="Q9DD78">
    <property type="glycosylation" value="8 sites"/>
</dbReference>
<dbReference type="PaxDb" id="9031-ENSGALP00000015018"/>
<dbReference type="Ensembl" id="ENSGALT00010035579.1">
    <property type="protein sequence ID" value="ENSGALP00010020657.1"/>
    <property type="gene ID" value="ENSGALG00010014793.1"/>
</dbReference>
<dbReference type="Ensembl" id="ENSGALT00010035584.1">
    <property type="protein sequence ID" value="ENSGALP00010020660.1"/>
    <property type="gene ID" value="ENSGALG00010014793.1"/>
</dbReference>
<dbReference type="Ensembl" id="ENSGALT00010035586.1">
    <property type="protein sequence ID" value="ENSGALP00010020661.1"/>
    <property type="gene ID" value="ENSGALG00010014793.1"/>
</dbReference>
<dbReference type="Ensembl" id="ENSGALT00010035591.1">
    <property type="protein sequence ID" value="ENSGALP00010020664.1"/>
    <property type="gene ID" value="ENSGALG00010014793.1"/>
</dbReference>
<dbReference type="Ensembl" id="ENSGALT00010035593.1">
    <property type="protein sequence ID" value="ENSGALP00010020665.1"/>
    <property type="gene ID" value="ENSGALG00010014793.1"/>
</dbReference>
<dbReference type="Ensembl" id="ENSGALT00010035596.1">
    <property type="protein sequence ID" value="ENSGALP00010020667.1"/>
    <property type="gene ID" value="ENSGALG00010014793.1"/>
</dbReference>
<dbReference type="Ensembl" id="ENSGALT00010035598.1">
    <property type="protein sequence ID" value="ENSGALP00010020669.1"/>
    <property type="gene ID" value="ENSGALG00010014793.1"/>
</dbReference>
<dbReference type="Ensembl" id="ENSGALT00010035599.1">
    <property type="protein sequence ID" value="ENSGALP00010020670.1"/>
    <property type="gene ID" value="ENSGALG00010014793.1"/>
</dbReference>
<dbReference type="Ensembl" id="ENSGALT00010035601.1">
    <property type="protein sequence ID" value="ENSGALP00010020671.1"/>
    <property type="gene ID" value="ENSGALG00010014793.1"/>
</dbReference>
<dbReference type="Ensembl" id="ENSGALT00010035603.1">
    <property type="protein sequence ID" value="ENSGALP00010020672.1"/>
    <property type="gene ID" value="ENSGALG00010014793.1"/>
</dbReference>
<dbReference type="KEGG" id="gga:374141"/>
<dbReference type="VEuPathDB" id="HostDB:geneid_374141"/>
<dbReference type="eggNOG" id="KOG4641">
    <property type="taxonomic scope" value="Eukaryota"/>
</dbReference>
<dbReference type="GeneTree" id="ENSGT00940000156323"/>
<dbReference type="InParanoid" id="Q9DD78"/>
<dbReference type="OMA" id="NRDICYD"/>
<dbReference type="OrthoDB" id="1081807at2759"/>
<dbReference type="PhylomeDB" id="Q9DD78"/>
<dbReference type="TreeFam" id="TF351113"/>
<dbReference type="Reactome" id="R-GGA-433822">
    <property type="pathway name" value="NFkB and MAPK activation mediated by TRAF6"/>
</dbReference>
<dbReference type="Reactome" id="R-GGA-451514">
    <property type="pathway name" value="MyD88:TIRAP-dependent cascade initiated on plasma membrane"/>
</dbReference>
<dbReference type="Reactome" id="R-GGA-517856">
    <property type="pathway name" value="TLR2 subfamily cascade"/>
</dbReference>
<dbReference type="PRO" id="PR:Q9DD78"/>
<dbReference type="Proteomes" id="UP000000539">
    <property type="component" value="Chromosome 4"/>
</dbReference>
<dbReference type="Bgee" id="ENSGALG00000034722">
    <property type="expression patterns" value="Expressed in granulocyte and 13 other cell types or tissues"/>
</dbReference>
<dbReference type="GO" id="GO:0005886">
    <property type="term" value="C:plasma membrane"/>
    <property type="evidence" value="ECO:0000318"/>
    <property type="project" value="GO_Central"/>
</dbReference>
<dbReference type="GO" id="GO:0043235">
    <property type="term" value="C:receptor complex"/>
    <property type="evidence" value="ECO:0000318"/>
    <property type="project" value="GO_Central"/>
</dbReference>
<dbReference type="GO" id="GO:0061809">
    <property type="term" value="F:NAD+ nucleosidase activity, cyclic ADP-ribose generating"/>
    <property type="evidence" value="ECO:0007669"/>
    <property type="project" value="UniProtKB-EC"/>
</dbReference>
<dbReference type="GO" id="GO:0038023">
    <property type="term" value="F:signaling receptor activity"/>
    <property type="evidence" value="ECO:0000318"/>
    <property type="project" value="GO_Central"/>
</dbReference>
<dbReference type="GO" id="GO:0004888">
    <property type="term" value="F:transmembrane signaling receptor activity"/>
    <property type="evidence" value="ECO:0007669"/>
    <property type="project" value="InterPro"/>
</dbReference>
<dbReference type="GO" id="GO:0042497">
    <property type="term" value="F:triacyl lipopeptide binding"/>
    <property type="evidence" value="ECO:0000318"/>
    <property type="project" value="GO_Central"/>
</dbReference>
<dbReference type="GO" id="GO:0006954">
    <property type="term" value="P:inflammatory response"/>
    <property type="evidence" value="ECO:0000318"/>
    <property type="project" value="GO_Central"/>
</dbReference>
<dbReference type="GO" id="GO:0045087">
    <property type="term" value="P:innate immune response"/>
    <property type="evidence" value="ECO:0007669"/>
    <property type="project" value="UniProtKB-KW"/>
</dbReference>
<dbReference type="GO" id="GO:0002224">
    <property type="term" value="P:toll-like receptor signaling pathway"/>
    <property type="evidence" value="ECO:0000318"/>
    <property type="project" value="GO_Central"/>
</dbReference>
<dbReference type="FunFam" id="3.40.50.10140:FF:000001">
    <property type="entry name" value="Toll-like receptor 2"/>
    <property type="match status" value="1"/>
</dbReference>
<dbReference type="FunFam" id="3.80.10.10:FF:000046">
    <property type="entry name" value="Toll-like receptor 2"/>
    <property type="match status" value="1"/>
</dbReference>
<dbReference type="Gene3D" id="3.80.10.10">
    <property type="entry name" value="Ribonuclease Inhibitor"/>
    <property type="match status" value="1"/>
</dbReference>
<dbReference type="Gene3D" id="3.40.50.10140">
    <property type="entry name" value="Toll/interleukin-1 receptor homology (TIR) domain"/>
    <property type="match status" value="1"/>
</dbReference>
<dbReference type="InterPro" id="IPR000483">
    <property type="entry name" value="Cys-rich_flank_reg_C"/>
</dbReference>
<dbReference type="InterPro" id="IPR018247">
    <property type="entry name" value="EF_Hand_1_Ca_BS"/>
</dbReference>
<dbReference type="InterPro" id="IPR001611">
    <property type="entry name" value="Leu-rich_rpt"/>
</dbReference>
<dbReference type="InterPro" id="IPR003591">
    <property type="entry name" value="Leu-rich_rpt_typical-subtyp"/>
</dbReference>
<dbReference type="InterPro" id="IPR032675">
    <property type="entry name" value="LRR_dom_sf"/>
</dbReference>
<dbReference type="InterPro" id="IPR000157">
    <property type="entry name" value="TIR_dom"/>
</dbReference>
<dbReference type="InterPro" id="IPR017241">
    <property type="entry name" value="Toll-like_receptor"/>
</dbReference>
<dbReference type="InterPro" id="IPR035897">
    <property type="entry name" value="Toll_tir_struct_dom_sf"/>
</dbReference>
<dbReference type="PANTHER" id="PTHR24365">
    <property type="entry name" value="TOLL-LIKE RECEPTOR"/>
    <property type="match status" value="1"/>
</dbReference>
<dbReference type="PANTHER" id="PTHR24365:SF17">
    <property type="entry name" value="TOLL-LIKE RECEPTOR 2"/>
    <property type="match status" value="1"/>
</dbReference>
<dbReference type="Pfam" id="PF13855">
    <property type="entry name" value="LRR_8"/>
    <property type="match status" value="3"/>
</dbReference>
<dbReference type="Pfam" id="PF01582">
    <property type="entry name" value="TIR"/>
    <property type="match status" value="1"/>
</dbReference>
<dbReference type="PIRSF" id="PIRSF037595">
    <property type="entry name" value="Toll-like_receptor"/>
    <property type="match status" value="1"/>
</dbReference>
<dbReference type="PRINTS" id="PR01537">
    <property type="entry name" value="INTRLKN1R1F"/>
</dbReference>
<dbReference type="SMART" id="SM00364">
    <property type="entry name" value="LRR_BAC"/>
    <property type="match status" value="5"/>
</dbReference>
<dbReference type="SMART" id="SM00369">
    <property type="entry name" value="LRR_TYP"/>
    <property type="match status" value="6"/>
</dbReference>
<dbReference type="SMART" id="SM00082">
    <property type="entry name" value="LRRCT"/>
    <property type="match status" value="1"/>
</dbReference>
<dbReference type="SMART" id="SM00255">
    <property type="entry name" value="TIR"/>
    <property type="match status" value="1"/>
</dbReference>
<dbReference type="SUPFAM" id="SSF52058">
    <property type="entry name" value="L domain-like"/>
    <property type="match status" value="2"/>
</dbReference>
<dbReference type="SUPFAM" id="SSF52200">
    <property type="entry name" value="Toll/Interleukin receptor TIR domain"/>
    <property type="match status" value="1"/>
</dbReference>
<dbReference type="PROSITE" id="PS51450">
    <property type="entry name" value="LRR"/>
    <property type="match status" value="10"/>
</dbReference>
<dbReference type="PROSITE" id="PS50104">
    <property type="entry name" value="TIR"/>
    <property type="match status" value="1"/>
</dbReference>
<keyword id="KW-1015">Disulfide bond</keyword>
<keyword id="KW-0325">Glycoprotein</keyword>
<keyword id="KW-0391">Immunity</keyword>
<keyword id="KW-0395">Inflammatory response</keyword>
<keyword id="KW-0399">Innate immunity</keyword>
<keyword id="KW-0433">Leucine-rich repeat</keyword>
<keyword id="KW-0472">Membrane</keyword>
<keyword id="KW-0520">NAD</keyword>
<keyword id="KW-0675">Receptor</keyword>
<keyword id="KW-1185">Reference proteome</keyword>
<keyword id="KW-0677">Repeat</keyword>
<keyword id="KW-0732">Signal</keyword>
<keyword id="KW-0812">Transmembrane</keyword>
<keyword id="KW-1133">Transmembrane helix</keyword>
<evidence type="ECO:0000250" key="1"/>
<evidence type="ECO:0000250" key="2">
    <source>
        <dbReference type="UniProtKB" id="O00206"/>
    </source>
</evidence>
<evidence type="ECO:0000255" key="3"/>
<evidence type="ECO:0000255" key="4">
    <source>
        <dbReference type="PROSITE-ProRule" id="PRU00204"/>
    </source>
</evidence>
<evidence type="ECO:0000305" key="5"/>
<comment type="function">
    <text evidence="1">Participates in the innate immune response to microbial agents. Acts via MYD88 and TRAF6, leading to NF-kappa-B activation, cytokine secretion and the inflammatory response (By similarity). Does not respond to LPS and responds with less ability than TLR2-2 to mycoplasmal macrophage-activating lipopeptide-2kD (MALP-2).</text>
</comment>
<comment type="subunit">
    <text evidence="1">Binds MYD88 (via TIR domain).</text>
</comment>
<comment type="subcellular location">
    <subcellularLocation>
        <location evidence="1">Membrane</location>
        <topology evidence="1">Single-pass type I membrane protein</topology>
    </subcellularLocation>
</comment>
<comment type="tissue specificity">
    <text>Highly expressed in ovary. Detected at lower levels in heart, lung, gizzard and testis.</text>
</comment>
<comment type="PTM">
    <text>N-glycosylated. TLR2-1 is more heavily glycosylated than TLR2-2.</text>
</comment>
<comment type="similarity">
    <text evidence="5">Belongs to the Toll-like receptor family.</text>
</comment>
<comment type="caution">
    <text evidence="2 5">In some plant proteins and in human SARM1, the TIR domain has NAD(+) hydrolase (NADase) activity (By similarity). However, despite the presence of the catalytic Asp residue, the isolated TIR domain of human TLR4 lacks NADase activity (By similarity). Based on this, it is unlikely that Toll-like receptors have NADase activity.</text>
</comment>
<name>TLR21_CHICK</name>
<feature type="signal peptide" evidence="3">
    <location>
        <begin position="1"/>
        <end position="25"/>
    </location>
</feature>
<feature type="chain" id="PRO_0000034713" description="Toll-like receptor 2 type-1">
    <location>
        <begin position="26"/>
        <end position="793"/>
    </location>
</feature>
<feature type="topological domain" description="Extracellular" evidence="3">
    <location>
        <begin position="26"/>
        <end position="597"/>
    </location>
</feature>
<feature type="transmembrane region" description="Helical" evidence="3">
    <location>
        <begin position="598"/>
        <end position="618"/>
    </location>
</feature>
<feature type="topological domain" description="Cytoplasmic" evidence="3">
    <location>
        <begin position="619"/>
        <end position="793"/>
    </location>
</feature>
<feature type="repeat" description="LRR 1">
    <location>
        <begin position="64"/>
        <end position="85"/>
    </location>
</feature>
<feature type="repeat" description="LRR 2">
    <location>
        <begin position="88"/>
        <end position="109"/>
    </location>
</feature>
<feature type="repeat" description="LRR 3">
    <location>
        <begin position="112"/>
        <end position="133"/>
    </location>
</feature>
<feature type="repeat" description="LRR 4">
    <location>
        <begin position="136"/>
        <end position="157"/>
    </location>
</feature>
<feature type="repeat" description="LRR 5">
    <location>
        <begin position="161"/>
        <end position="182"/>
    </location>
</feature>
<feature type="repeat" description="LRR 6">
    <location>
        <begin position="185"/>
        <end position="206"/>
    </location>
</feature>
<feature type="repeat" description="LRR 7">
    <location>
        <begin position="370"/>
        <end position="391"/>
    </location>
</feature>
<feature type="repeat" description="LRR 8">
    <location>
        <begin position="397"/>
        <end position="418"/>
    </location>
</feature>
<feature type="repeat" description="LRR 9">
    <location>
        <begin position="423"/>
        <end position="444"/>
    </location>
</feature>
<feature type="repeat" description="LRR 10">
    <location>
        <begin position="446"/>
        <end position="467"/>
    </location>
</feature>
<feature type="repeat" description="LRR 11">
    <location>
        <begin position="468"/>
        <end position="486"/>
    </location>
</feature>
<feature type="repeat" description="LRR 12">
    <location>
        <begin position="487"/>
        <end position="508"/>
    </location>
</feature>
<feature type="repeat" description="LRR 13">
    <location>
        <begin position="509"/>
        <end position="530"/>
    </location>
</feature>
<feature type="domain" description="LRRCT">
    <location>
        <begin position="542"/>
        <end position="596"/>
    </location>
</feature>
<feature type="domain" description="TIR" evidence="4">
    <location>
        <begin position="648"/>
        <end position="791"/>
    </location>
</feature>
<feature type="glycosylation site" description="N-linked (GlcNAc...) asparagine" evidence="3">
    <location>
        <position position="48"/>
    </location>
</feature>
<feature type="glycosylation site" description="N-linked (GlcNAc...) asparagine" evidence="3">
    <location>
        <position position="120"/>
    </location>
</feature>
<feature type="glycosylation site" description="N-linked (GlcNAc...) asparagine" evidence="3">
    <location>
        <position position="161"/>
    </location>
</feature>
<feature type="glycosylation site" description="N-linked (GlcNAc...) asparagine" evidence="3">
    <location>
        <position position="195"/>
    </location>
</feature>
<feature type="glycosylation site" description="N-linked (GlcNAc...) asparagine" evidence="3">
    <location>
        <position position="254"/>
    </location>
</feature>
<feature type="glycosylation site" description="N-linked (GlcNAc...) asparagine" evidence="3">
    <location>
        <position position="325"/>
    </location>
</feature>
<feature type="glycosylation site" description="N-linked (GlcNAc...) asparagine" evidence="3">
    <location>
        <position position="402"/>
    </location>
</feature>
<feature type="glycosylation site" description="N-linked (GlcNAc...) asparagine" evidence="3">
    <location>
        <position position="451"/>
    </location>
</feature>
<feature type="disulfide bond" evidence="1">
    <location>
        <begin position="41"/>
        <end position="47"/>
    </location>
</feature>
<feature type="disulfide bond" evidence="1">
    <location>
        <begin position="362"/>
        <end position="391"/>
    </location>
</feature>
<feature type="disulfide bond" evidence="1">
    <location>
        <begin position="441"/>
        <end position="463"/>
    </location>
</feature>
<sequence>MFNQSKQKPTMKLMWQAWLIYTALAAHLPEEQALRQACLSCDATQSCNCSFMGLDFIPPGLTGKITVLNLAHNRIKLIRTHDLQKAVNLRTLLLQSNQISSIDEDSFGSQGKLELLDLSNNSLAHLSPVWFGPLFSLQHLRIQGNSYSDLGESSPFSSLRNLSSLHLGNPQFSIIRQGNFEGIVFLNTLRIDGDNLSQYEPGSLKSIRKINHMIISIRRIDVFSAVIRDLLHSAIWLEVREIKLDIENEKLVQNSTLPLTIQKLTFTGASFTDKYISQIAVLLKEIRSLRELEAIDCVLEGKGAWDMTEIARSKQSSIETLSITNMTILDFYLFFDLEGIETQVGKLKRLSIASSKVFMVPCRLARYFSSLLYLDFHDNLLVNNRLGETICEDAWPSLQTLNLSKNSLKSLKQAARYISNLHKLINLDISENNFGEIPDMCEWPENLKYLNLSSTQIPKLTTCIPSTLEVLDVSANNLQDFGLQLPFLKELYLTKNHLKTLPEATDIPNLVAMSISRNKLNSFSKEEFESFKQMELLDASANNFICSCEFLSFIHHEAGIAQVLVGWPESYICDSPLTVRGAQVGSVQLSLMECHRSLLVSLICTLVFLFILILVVVGYKYHAVWYMRMTWAWLQAKRKPKRAPTKDICYDAFVSYSENDSNWVENIMVQQLEQACPPFRLCLHKRDFVPGKWIVDNIIDSIEKSHKTLFVLSEHFVQSEWCKYELDFSHFRLFDENNDVAILILLEPIQSQAIPKRFCKLRKIMNTKTYLEWPPDEEQQQMFWENLKAALKS</sequence>